<reference key="1">
    <citation type="submission" date="1996-05" db="EMBL/GenBank/DDBJ databases">
        <authorList>
            <person name="Kasai M."/>
        </authorList>
    </citation>
    <scope>NUCLEOTIDE SEQUENCE [MRNA]</scope>
    <source>
        <tissue>Ovary</tissue>
    </source>
</reference>
<protein>
    <recommendedName>
        <fullName>Translin</fullName>
        <ecNumber evidence="3">3.1.-.-</ecNumber>
    </recommendedName>
    <alternativeName>
        <fullName>Component 3 of promoter of RISC</fullName>
        <shortName>C3PO</shortName>
    </alternativeName>
</protein>
<organism>
    <name type="scientific">Cricetulus griseus</name>
    <name type="common">Chinese hamster</name>
    <name type="synonym">Cricetulus barabensis griseus</name>
    <dbReference type="NCBI Taxonomy" id="10029"/>
    <lineage>
        <taxon>Eukaryota</taxon>
        <taxon>Metazoa</taxon>
        <taxon>Chordata</taxon>
        <taxon>Craniata</taxon>
        <taxon>Vertebrata</taxon>
        <taxon>Euteleostomi</taxon>
        <taxon>Mammalia</taxon>
        <taxon>Eutheria</taxon>
        <taxon>Euarchontoglires</taxon>
        <taxon>Glires</taxon>
        <taxon>Rodentia</taxon>
        <taxon>Myomorpha</taxon>
        <taxon>Muroidea</taxon>
        <taxon>Cricetidae</taxon>
        <taxon>Cricetinae</taxon>
        <taxon>Cricetulus</taxon>
    </lineage>
</organism>
<gene>
    <name type="primary">TSN</name>
</gene>
<name>TSN_CRIGR</name>
<evidence type="ECO:0000250" key="1"/>
<evidence type="ECO:0000250" key="2">
    <source>
        <dbReference type="UniProtKB" id="Q15631"/>
    </source>
</evidence>
<evidence type="ECO:0000250" key="3">
    <source>
        <dbReference type="UniProtKB" id="Q62348"/>
    </source>
</evidence>
<evidence type="ECO:0000255" key="4"/>
<evidence type="ECO:0000305" key="5"/>
<feature type="chain" id="PRO_0000191682" description="Translin">
    <location>
        <begin position="1"/>
        <end position="228"/>
    </location>
</feature>
<feature type="region of interest" description="DNA/RNA binding" evidence="1">
    <location>
        <begin position="86"/>
        <end position="90"/>
    </location>
</feature>
<feature type="region of interest" description="Leucine-zipper" evidence="4">
    <location>
        <begin position="177"/>
        <end position="198"/>
    </location>
</feature>
<feature type="modified residue" description="N6-acetyllysine" evidence="2">
    <location>
        <position position="187"/>
    </location>
</feature>
<feature type="modified residue" description="Phosphoserine" evidence="2">
    <location>
        <position position="190"/>
    </location>
</feature>
<feature type="modified residue" description="N6-acetyllysine" evidence="2">
    <location>
        <position position="199"/>
    </location>
</feature>
<comment type="function">
    <text evidence="2">DNA-binding protein that specifically recognizes consensus sequences at the breakpoint junctions in chromosomal translocations, mostly involving immunoglobulin (Ig)/T-cell receptor gene segments. Seems to recognize single-stranded DNA ends generated by staggered breaks occurring at recombination hot spots.</text>
</comment>
<comment type="function">
    <text evidence="3">Exhibits both single-stranded and double-stranded endoribonuclease activity. May act as an activator of RNA-induced silencing complex (RISC) by facilitating endonucleolytic cleavage of the siRNA passenger strand.</text>
</comment>
<comment type="subunit">
    <text evidence="2">Ring-shaped heterooctamer of six TSN and two TSNAX subunits, DNA/RNA binding occurs inside the ring.</text>
</comment>
<comment type="subcellular location">
    <subcellularLocation>
        <location evidence="2">Cytoplasm</location>
    </subcellularLocation>
    <subcellularLocation>
        <location evidence="2">Nucleus</location>
    </subcellularLocation>
</comment>
<comment type="similarity">
    <text evidence="5">Belongs to the translin family.</text>
</comment>
<keyword id="KW-0007">Acetylation</keyword>
<keyword id="KW-0963">Cytoplasm</keyword>
<keyword id="KW-0238">DNA-binding</keyword>
<keyword id="KW-0255">Endonuclease</keyword>
<keyword id="KW-0378">Hydrolase</keyword>
<keyword id="KW-0540">Nuclease</keyword>
<keyword id="KW-0539">Nucleus</keyword>
<keyword id="KW-0597">Phosphoprotein</keyword>
<keyword id="KW-0694">RNA-binding</keyword>
<sequence length="228" mass="26171">MSVSEIFVELQGFLAAEQDIREEIRKVVQSLEQTAREILTLLQGVHQGTGFQDIPKRCLKAREHFGTVKTHLTSLKTKFPAEQYYRFHEHWRFVLQRLVFLAAFVVYLETETLVTREAVTEILGIEPDREKGFHLDVEDYLSGVLILASELSRLSVNSVTAGDYSRPLHISTFINELDSGFRLLNLKNDSLRKRYDGLKYDVKKVEEVVYDLSIRGFNKETAAACGEK</sequence>
<dbReference type="EC" id="3.1.-.-" evidence="3"/>
<dbReference type="EMBL" id="X98066">
    <property type="protein sequence ID" value="CAA66669.1"/>
    <property type="molecule type" value="mRNA"/>
</dbReference>
<dbReference type="RefSeq" id="NP_001233604.1">
    <property type="nucleotide sequence ID" value="NM_001246675.1"/>
</dbReference>
<dbReference type="SMR" id="P97891"/>
<dbReference type="PaxDb" id="10029-NP_001233604.1"/>
<dbReference type="Ensembl" id="ENSCGRT00001022757.1">
    <property type="protein sequence ID" value="ENSCGRP00001018513.1"/>
    <property type="gene ID" value="ENSCGRG00001018233.1"/>
</dbReference>
<dbReference type="GeneID" id="100689410"/>
<dbReference type="KEGG" id="cge:100689410"/>
<dbReference type="CTD" id="7247"/>
<dbReference type="eggNOG" id="KOG3067">
    <property type="taxonomic scope" value="Eukaryota"/>
</dbReference>
<dbReference type="GeneTree" id="ENSGT00940000153568"/>
<dbReference type="OMA" id="DAFHFTI"/>
<dbReference type="OrthoDB" id="829at2759"/>
<dbReference type="Proteomes" id="UP000694386">
    <property type="component" value="Unplaced"/>
</dbReference>
<dbReference type="Proteomes" id="UP001108280">
    <property type="component" value="Chromosome 5"/>
</dbReference>
<dbReference type="GO" id="GO:0005783">
    <property type="term" value="C:endoplasmic reticulum"/>
    <property type="evidence" value="ECO:0007669"/>
    <property type="project" value="Ensembl"/>
</dbReference>
<dbReference type="GO" id="GO:1902555">
    <property type="term" value="C:endoribonuclease complex"/>
    <property type="evidence" value="ECO:0007669"/>
    <property type="project" value="Ensembl"/>
</dbReference>
<dbReference type="GO" id="GO:0001673">
    <property type="term" value="C:male germ cell nucleus"/>
    <property type="evidence" value="ECO:0007669"/>
    <property type="project" value="Ensembl"/>
</dbReference>
<dbReference type="GO" id="GO:0005654">
    <property type="term" value="C:nucleoplasm"/>
    <property type="evidence" value="ECO:0007669"/>
    <property type="project" value="Ensembl"/>
</dbReference>
<dbReference type="GO" id="GO:0004519">
    <property type="term" value="F:endonuclease activity"/>
    <property type="evidence" value="ECO:0007669"/>
    <property type="project" value="UniProtKB-KW"/>
</dbReference>
<dbReference type="GO" id="GO:0042802">
    <property type="term" value="F:identical protein binding"/>
    <property type="evidence" value="ECO:0007669"/>
    <property type="project" value="Ensembl"/>
</dbReference>
<dbReference type="GO" id="GO:0003729">
    <property type="term" value="F:mRNA binding"/>
    <property type="evidence" value="ECO:0007669"/>
    <property type="project" value="Ensembl"/>
</dbReference>
<dbReference type="GO" id="GO:0043565">
    <property type="term" value="F:sequence-specific DNA binding"/>
    <property type="evidence" value="ECO:0007669"/>
    <property type="project" value="InterPro"/>
</dbReference>
<dbReference type="GO" id="GO:0003697">
    <property type="term" value="F:single-stranded DNA binding"/>
    <property type="evidence" value="ECO:0007669"/>
    <property type="project" value="InterPro"/>
</dbReference>
<dbReference type="GO" id="GO:0030422">
    <property type="term" value="P:siRNA processing"/>
    <property type="evidence" value="ECO:0007669"/>
    <property type="project" value="Ensembl"/>
</dbReference>
<dbReference type="CDD" id="cd14819">
    <property type="entry name" value="Translin"/>
    <property type="match status" value="1"/>
</dbReference>
<dbReference type="FunFam" id="1.20.58.200:FF:000002">
    <property type="entry name" value="Putative translin"/>
    <property type="match status" value="1"/>
</dbReference>
<dbReference type="FunFam" id="1.20.58.190:FF:000001">
    <property type="entry name" value="Translin"/>
    <property type="match status" value="1"/>
</dbReference>
<dbReference type="Gene3D" id="1.20.58.190">
    <property type="entry name" value="Translin, domain 1"/>
    <property type="match status" value="1"/>
</dbReference>
<dbReference type="Gene3D" id="1.20.58.200">
    <property type="entry name" value="Translin, domain 2"/>
    <property type="match status" value="1"/>
</dbReference>
<dbReference type="InterPro" id="IPR033956">
    <property type="entry name" value="Translin"/>
</dbReference>
<dbReference type="InterPro" id="IPR016069">
    <property type="entry name" value="Translin_C"/>
</dbReference>
<dbReference type="InterPro" id="IPR002848">
    <property type="entry name" value="Translin_fam"/>
</dbReference>
<dbReference type="InterPro" id="IPR016068">
    <property type="entry name" value="Translin_N"/>
</dbReference>
<dbReference type="InterPro" id="IPR036081">
    <property type="entry name" value="Translin_sf"/>
</dbReference>
<dbReference type="PANTHER" id="PTHR10741">
    <property type="entry name" value="TRANSLIN AND TRANSLIN ASSOCIATED PROTEIN X"/>
    <property type="match status" value="1"/>
</dbReference>
<dbReference type="Pfam" id="PF01997">
    <property type="entry name" value="Translin"/>
    <property type="match status" value="1"/>
</dbReference>
<dbReference type="SUPFAM" id="SSF74784">
    <property type="entry name" value="Translin"/>
    <property type="match status" value="1"/>
</dbReference>
<accession>P97891</accession>
<proteinExistence type="evidence at transcript level"/>